<accession>P37816</accession>
<feature type="chain" id="PRO_0000071705" description="ATP synthase protein I">
    <location>
        <begin position="1"/>
        <end position="127"/>
    </location>
</feature>
<feature type="transmembrane region" description="Helical" evidence="1">
    <location>
        <begin position="13"/>
        <end position="30"/>
    </location>
</feature>
<feature type="transmembrane region" description="Helical" evidence="1">
    <location>
        <begin position="33"/>
        <end position="53"/>
    </location>
</feature>
<feature type="transmembrane region" description="Helical" evidence="1">
    <location>
        <begin position="97"/>
        <end position="117"/>
    </location>
</feature>
<sequence length="127" mass="14487">MDDPKLTFSRQRKYLLFILAVYVLGYGLTAYKTVFLGLILGTVFSLFNFLLLVRRMNAFDRAVEKGKSIRSLGSAARWCNAILAVAVAYKNPEYFHMASTVIGLMTIYPVIMIDSFIQLKRSSMEER</sequence>
<comment type="function">
    <text>A possible function for this protein is to guide the assembly of the membrane sector of the ATPase enzyme complex.</text>
</comment>
<comment type="subcellular location">
    <subcellularLocation>
        <location evidence="2">Cell membrane</location>
        <topology evidence="2">Multi-pass membrane protein</topology>
    </subcellularLocation>
</comment>
<comment type="similarity">
    <text evidence="2">Belongs to the bacterial AtpI family.</text>
</comment>
<name>ATPZ_BACSU</name>
<reference key="1">
    <citation type="journal article" date="1994" name="J. Bacteriol.">
        <title>Bacillus subtilis F0F1 ATPase: DNA sequence of the atp operon and characterization of atp mutants.</title>
        <authorList>
            <person name="Santana M."/>
            <person name="Ionescu M.S."/>
            <person name="Vertes A."/>
            <person name="Longin R."/>
            <person name="Kunst F."/>
            <person name="Danchin A."/>
            <person name="Glaser P."/>
        </authorList>
    </citation>
    <scope>NUCLEOTIDE SEQUENCE [GENOMIC DNA]</scope>
    <source>
        <strain>168</strain>
    </source>
</reference>
<reference key="2">
    <citation type="journal article" date="1997" name="Nature">
        <title>The complete genome sequence of the Gram-positive bacterium Bacillus subtilis.</title>
        <authorList>
            <person name="Kunst F."/>
            <person name="Ogasawara N."/>
            <person name="Moszer I."/>
            <person name="Albertini A.M."/>
            <person name="Alloni G."/>
            <person name="Azevedo V."/>
            <person name="Bertero M.G."/>
            <person name="Bessieres P."/>
            <person name="Bolotin A."/>
            <person name="Borchert S."/>
            <person name="Borriss R."/>
            <person name="Boursier L."/>
            <person name="Brans A."/>
            <person name="Braun M."/>
            <person name="Brignell S.C."/>
            <person name="Bron S."/>
            <person name="Brouillet S."/>
            <person name="Bruschi C.V."/>
            <person name="Caldwell B."/>
            <person name="Capuano V."/>
            <person name="Carter N.M."/>
            <person name="Choi S.-K."/>
            <person name="Codani J.-J."/>
            <person name="Connerton I.F."/>
            <person name="Cummings N.J."/>
            <person name="Daniel R.A."/>
            <person name="Denizot F."/>
            <person name="Devine K.M."/>
            <person name="Duesterhoeft A."/>
            <person name="Ehrlich S.D."/>
            <person name="Emmerson P.T."/>
            <person name="Entian K.-D."/>
            <person name="Errington J."/>
            <person name="Fabret C."/>
            <person name="Ferrari E."/>
            <person name="Foulger D."/>
            <person name="Fritz C."/>
            <person name="Fujita M."/>
            <person name="Fujita Y."/>
            <person name="Fuma S."/>
            <person name="Galizzi A."/>
            <person name="Galleron N."/>
            <person name="Ghim S.-Y."/>
            <person name="Glaser P."/>
            <person name="Goffeau A."/>
            <person name="Golightly E.J."/>
            <person name="Grandi G."/>
            <person name="Guiseppi G."/>
            <person name="Guy B.J."/>
            <person name="Haga K."/>
            <person name="Haiech J."/>
            <person name="Harwood C.R."/>
            <person name="Henaut A."/>
            <person name="Hilbert H."/>
            <person name="Holsappel S."/>
            <person name="Hosono S."/>
            <person name="Hullo M.-F."/>
            <person name="Itaya M."/>
            <person name="Jones L.-M."/>
            <person name="Joris B."/>
            <person name="Karamata D."/>
            <person name="Kasahara Y."/>
            <person name="Klaerr-Blanchard M."/>
            <person name="Klein C."/>
            <person name="Kobayashi Y."/>
            <person name="Koetter P."/>
            <person name="Koningstein G."/>
            <person name="Krogh S."/>
            <person name="Kumano M."/>
            <person name="Kurita K."/>
            <person name="Lapidus A."/>
            <person name="Lardinois S."/>
            <person name="Lauber J."/>
            <person name="Lazarevic V."/>
            <person name="Lee S.-M."/>
            <person name="Levine A."/>
            <person name="Liu H."/>
            <person name="Masuda S."/>
            <person name="Mauel C."/>
            <person name="Medigue C."/>
            <person name="Medina N."/>
            <person name="Mellado R.P."/>
            <person name="Mizuno M."/>
            <person name="Moestl D."/>
            <person name="Nakai S."/>
            <person name="Noback M."/>
            <person name="Noone D."/>
            <person name="O'Reilly M."/>
            <person name="Ogawa K."/>
            <person name="Ogiwara A."/>
            <person name="Oudega B."/>
            <person name="Park S.-H."/>
            <person name="Parro V."/>
            <person name="Pohl T.M."/>
            <person name="Portetelle D."/>
            <person name="Porwollik S."/>
            <person name="Prescott A.M."/>
            <person name="Presecan E."/>
            <person name="Pujic P."/>
            <person name="Purnelle B."/>
            <person name="Rapoport G."/>
            <person name="Rey M."/>
            <person name="Reynolds S."/>
            <person name="Rieger M."/>
            <person name="Rivolta C."/>
            <person name="Rocha E."/>
            <person name="Roche B."/>
            <person name="Rose M."/>
            <person name="Sadaie Y."/>
            <person name="Sato T."/>
            <person name="Scanlan E."/>
            <person name="Schleich S."/>
            <person name="Schroeter R."/>
            <person name="Scoffone F."/>
            <person name="Sekiguchi J."/>
            <person name="Sekowska A."/>
            <person name="Seror S.J."/>
            <person name="Serror P."/>
            <person name="Shin B.-S."/>
            <person name="Soldo B."/>
            <person name="Sorokin A."/>
            <person name="Tacconi E."/>
            <person name="Takagi T."/>
            <person name="Takahashi H."/>
            <person name="Takemaru K."/>
            <person name="Takeuchi M."/>
            <person name="Tamakoshi A."/>
            <person name="Tanaka T."/>
            <person name="Terpstra P."/>
            <person name="Tognoni A."/>
            <person name="Tosato V."/>
            <person name="Uchiyama S."/>
            <person name="Vandenbol M."/>
            <person name="Vannier F."/>
            <person name="Vassarotti A."/>
            <person name="Viari A."/>
            <person name="Wambutt R."/>
            <person name="Wedler E."/>
            <person name="Wedler H."/>
            <person name="Weitzenegger T."/>
            <person name="Winters P."/>
            <person name="Wipat A."/>
            <person name="Yamamoto H."/>
            <person name="Yamane K."/>
            <person name="Yasumoto K."/>
            <person name="Yata K."/>
            <person name="Yoshida K."/>
            <person name="Yoshikawa H.-F."/>
            <person name="Zumstein E."/>
            <person name="Yoshikawa H."/>
            <person name="Danchin A."/>
        </authorList>
    </citation>
    <scope>NUCLEOTIDE SEQUENCE [LARGE SCALE GENOMIC DNA]</scope>
    <source>
        <strain>168</strain>
    </source>
</reference>
<gene>
    <name type="primary">atpI</name>
    <name type="ordered locus">BSU36880</name>
</gene>
<proteinExistence type="inferred from homology"/>
<keyword id="KW-1003">Cell membrane</keyword>
<keyword id="KW-0138">CF(0)</keyword>
<keyword id="KW-0375">Hydrogen ion transport</keyword>
<keyword id="KW-0406">Ion transport</keyword>
<keyword id="KW-0472">Membrane</keyword>
<keyword id="KW-1185">Reference proteome</keyword>
<keyword id="KW-0812">Transmembrane</keyword>
<keyword id="KW-1133">Transmembrane helix</keyword>
<keyword id="KW-0813">Transport</keyword>
<dbReference type="EMBL" id="Z28592">
    <property type="protein sequence ID" value="CAA82253.1"/>
    <property type="molecule type" value="Genomic_DNA"/>
</dbReference>
<dbReference type="EMBL" id="AL009126">
    <property type="protein sequence ID" value="CAB15705.1"/>
    <property type="molecule type" value="Genomic_DNA"/>
</dbReference>
<dbReference type="PIR" id="I40360">
    <property type="entry name" value="I40360"/>
</dbReference>
<dbReference type="RefSeq" id="NP_391569.1">
    <property type="nucleotide sequence ID" value="NC_000964.3"/>
</dbReference>
<dbReference type="RefSeq" id="WP_003243159.1">
    <property type="nucleotide sequence ID" value="NZ_OZ025638.1"/>
</dbReference>
<dbReference type="SMR" id="P37816"/>
<dbReference type="FunCoup" id="P37816">
    <property type="interactions" value="26"/>
</dbReference>
<dbReference type="STRING" id="224308.BSU36880"/>
<dbReference type="TCDB" id="1.A.77.3.2">
    <property type="family name" value="the mg(2+)/ca(2+) uniporter (mcu) family"/>
</dbReference>
<dbReference type="PaxDb" id="224308-BSU36880"/>
<dbReference type="EnsemblBacteria" id="CAB15705">
    <property type="protein sequence ID" value="CAB15705"/>
    <property type="gene ID" value="BSU_36880"/>
</dbReference>
<dbReference type="GeneID" id="86871693"/>
<dbReference type="GeneID" id="937003"/>
<dbReference type="KEGG" id="bsu:BSU36880"/>
<dbReference type="PATRIC" id="fig|224308.179.peg.3995"/>
<dbReference type="eggNOG" id="ENOG5032HZ5">
    <property type="taxonomic scope" value="Bacteria"/>
</dbReference>
<dbReference type="InParanoid" id="P37816"/>
<dbReference type="OrthoDB" id="2355635at2"/>
<dbReference type="PhylomeDB" id="P37816"/>
<dbReference type="BioCyc" id="BSUB:BSU36880-MONOMER"/>
<dbReference type="Proteomes" id="UP000001570">
    <property type="component" value="Chromosome"/>
</dbReference>
<dbReference type="GO" id="GO:0005886">
    <property type="term" value="C:plasma membrane"/>
    <property type="evidence" value="ECO:0007669"/>
    <property type="project" value="UniProtKB-SubCell"/>
</dbReference>
<dbReference type="GO" id="GO:0045259">
    <property type="term" value="C:proton-transporting ATP synthase complex"/>
    <property type="evidence" value="ECO:0007669"/>
    <property type="project" value="UniProtKB-KW"/>
</dbReference>
<dbReference type="GO" id="GO:1902600">
    <property type="term" value="P:proton transmembrane transport"/>
    <property type="evidence" value="ECO:0007669"/>
    <property type="project" value="UniProtKB-KW"/>
</dbReference>
<dbReference type="InterPro" id="IPR005598">
    <property type="entry name" value="ATP_synth_I"/>
</dbReference>
<dbReference type="InterPro" id="IPR039072">
    <property type="entry name" value="ATP_synth_I_Bacilli"/>
</dbReference>
<dbReference type="PANTHER" id="PTHR40035">
    <property type="entry name" value="ATP SYNTHASE PROTEIN I"/>
    <property type="match status" value="1"/>
</dbReference>
<dbReference type="PANTHER" id="PTHR40035:SF1">
    <property type="entry name" value="ATP SYNTHASE PROTEIN I"/>
    <property type="match status" value="1"/>
</dbReference>
<dbReference type="Pfam" id="PF03899">
    <property type="entry name" value="ATP-synt_I"/>
    <property type="match status" value="1"/>
</dbReference>
<evidence type="ECO:0000255" key="1"/>
<evidence type="ECO:0000305" key="2"/>
<organism>
    <name type="scientific">Bacillus subtilis (strain 168)</name>
    <dbReference type="NCBI Taxonomy" id="224308"/>
    <lineage>
        <taxon>Bacteria</taxon>
        <taxon>Bacillati</taxon>
        <taxon>Bacillota</taxon>
        <taxon>Bacilli</taxon>
        <taxon>Bacillales</taxon>
        <taxon>Bacillaceae</taxon>
        <taxon>Bacillus</taxon>
    </lineage>
</organism>
<protein>
    <recommendedName>
        <fullName>ATP synthase protein I</fullName>
    </recommendedName>
</protein>